<sequence length="365" mass="38708">MINTTSRRKIEHLKLCAESPVEARGVSAGFEDVTLIHRALPELNMDELDLTVDFLGKRMQAPFLIASITGGHPDTLPVNAALAAAAEELGVGIGVGSQRAAIDDPAQEDSFRVVRDKAPNAFVYGNVGAAQIRQYGVEGVEKLIEMIDADALAIHLNFLQEAIQPEGDRDATGCLDMIAEICSMVRIPVIAKETGAGISREDALLLHKAGVSAIDVGGVGGTSWAGVEVYRAKESKDPVSERLGELFWDFGIPTVASLIESRVSLPLIATGGVRTGLDIAKSIALGASAASAALPFVGPSLEGKESVVKVLSCMLDEFRAAMFLCGCANIQALHNSPVVVTGWTLKYLEQRGFNVKDYSLPKNAL</sequence>
<protein>
    <recommendedName>
        <fullName evidence="1">Isopentenyl-diphosphate delta-isomerase</fullName>
        <shortName evidence="1">IPP isomerase</shortName>
        <ecNumber evidence="1">5.3.3.2</ecNumber>
    </recommendedName>
    <alternativeName>
        <fullName evidence="1">Isopentenyl diphosphate:dimethylallyl diphosphate isomerase</fullName>
    </alternativeName>
    <alternativeName>
        <fullName evidence="1">Isopentenyl pyrophosphate isomerase</fullName>
    </alternativeName>
    <alternativeName>
        <fullName evidence="1">Type 2 isopentenyl diphosphate isomerase</fullName>
        <shortName evidence="1">IDI-2</shortName>
    </alternativeName>
</protein>
<comment type="function">
    <text evidence="1">Involved in the biosynthesis of isoprenoids. Catalyzes the 1,3-allylic rearrangement of the homoallylic substrate isopentenyl (IPP) to its allylic isomer, dimethylallyl diphosphate (DMAPP).</text>
</comment>
<comment type="catalytic activity">
    <reaction evidence="1">
        <text>isopentenyl diphosphate = dimethylallyl diphosphate</text>
        <dbReference type="Rhea" id="RHEA:23284"/>
        <dbReference type="ChEBI" id="CHEBI:57623"/>
        <dbReference type="ChEBI" id="CHEBI:128769"/>
        <dbReference type="EC" id="5.3.3.2"/>
    </reaction>
</comment>
<comment type="cofactor">
    <cofactor evidence="1">
        <name>FMN</name>
        <dbReference type="ChEBI" id="CHEBI:58210"/>
    </cofactor>
</comment>
<comment type="cofactor">
    <cofactor evidence="1">
        <name>NADPH</name>
        <dbReference type="ChEBI" id="CHEBI:57783"/>
    </cofactor>
</comment>
<comment type="cofactor">
    <cofactor evidence="1">
        <name>Mg(2+)</name>
        <dbReference type="ChEBI" id="CHEBI:18420"/>
    </cofactor>
</comment>
<comment type="subunit">
    <text evidence="1">Homooctamer. Dimer of tetramers.</text>
</comment>
<comment type="subcellular location">
    <subcellularLocation>
        <location evidence="1">Cytoplasm</location>
    </subcellularLocation>
</comment>
<comment type="similarity">
    <text evidence="1">Belongs to the IPP isomerase type 2 family.</text>
</comment>
<gene>
    <name evidence="1" type="primary">fni</name>
    <name type="synonym">idi</name>
    <name type="ordered locus">MA_0604</name>
</gene>
<organism>
    <name type="scientific">Methanosarcina acetivorans (strain ATCC 35395 / DSM 2834 / JCM 12185 / C2A)</name>
    <dbReference type="NCBI Taxonomy" id="188937"/>
    <lineage>
        <taxon>Archaea</taxon>
        <taxon>Methanobacteriati</taxon>
        <taxon>Methanobacteriota</taxon>
        <taxon>Stenosarchaea group</taxon>
        <taxon>Methanomicrobia</taxon>
        <taxon>Methanosarcinales</taxon>
        <taxon>Methanosarcinaceae</taxon>
        <taxon>Methanosarcina</taxon>
    </lineage>
</organism>
<keyword id="KW-0963">Cytoplasm</keyword>
<keyword id="KW-0285">Flavoprotein</keyword>
<keyword id="KW-0288">FMN</keyword>
<keyword id="KW-0413">Isomerase</keyword>
<keyword id="KW-0414">Isoprene biosynthesis</keyword>
<keyword id="KW-0460">Magnesium</keyword>
<keyword id="KW-0479">Metal-binding</keyword>
<keyword id="KW-0521">NADP</keyword>
<keyword id="KW-1185">Reference proteome</keyword>
<accession>Q8TT35</accession>
<proteinExistence type="inferred from homology"/>
<reference key="1">
    <citation type="journal article" date="2002" name="Genome Res.">
        <title>The genome of Methanosarcina acetivorans reveals extensive metabolic and physiological diversity.</title>
        <authorList>
            <person name="Galagan J.E."/>
            <person name="Nusbaum C."/>
            <person name="Roy A."/>
            <person name="Endrizzi M.G."/>
            <person name="Macdonald P."/>
            <person name="FitzHugh W."/>
            <person name="Calvo S."/>
            <person name="Engels R."/>
            <person name="Smirnov S."/>
            <person name="Atnoor D."/>
            <person name="Brown A."/>
            <person name="Allen N."/>
            <person name="Naylor J."/>
            <person name="Stange-Thomann N."/>
            <person name="DeArellano K."/>
            <person name="Johnson R."/>
            <person name="Linton L."/>
            <person name="McEwan P."/>
            <person name="McKernan K."/>
            <person name="Talamas J."/>
            <person name="Tirrell A."/>
            <person name="Ye W."/>
            <person name="Zimmer A."/>
            <person name="Barber R.D."/>
            <person name="Cann I."/>
            <person name="Graham D.E."/>
            <person name="Grahame D.A."/>
            <person name="Guss A.M."/>
            <person name="Hedderich R."/>
            <person name="Ingram-Smith C."/>
            <person name="Kuettner H.C."/>
            <person name="Krzycki J.A."/>
            <person name="Leigh J.A."/>
            <person name="Li W."/>
            <person name="Liu J."/>
            <person name="Mukhopadhyay B."/>
            <person name="Reeve J.N."/>
            <person name="Smith K."/>
            <person name="Springer T.A."/>
            <person name="Umayam L.A."/>
            <person name="White O."/>
            <person name="White R.H."/>
            <person name="de Macario E.C."/>
            <person name="Ferry J.G."/>
            <person name="Jarrell K.F."/>
            <person name="Jing H."/>
            <person name="Macario A.J.L."/>
            <person name="Paulsen I.T."/>
            <person name="Pritchett M."/>
            <person name="Sowers K.R."/>
            <person name="Swanson R.V."/>
            <person name="Zinder S.H."/>
            <person name="Lander E."/>
            <person name="Metcalf W.W."/>
            <person name="Birren B."/>
        </authorList>
    </citation>
    <scope>NUCLEOTIDE SEQUENCE [LARGE SCALE GENOMIC DNA]</scope>
    <source>
        <strain>ATCC 35395 / DSM 2834 / JCM 12185 / C2A</strain>
    </source>
</reference>
<feature type="chain" id="PRO_0000134443" description="Isopentenyl-diphosphate delta-isomerase">
    <location>
        <begin position="1"/>
        <end position="365"/>
    </location>
</feature>
<feature type="binding site" evidence="1">
    <location>
        <begin position="8"/>
        <end position="9"/>
    </location>
    <ligand>
        <name>substrate</name>
    </ligand>
</feature>
<feature type="binding site" evidence="1">
    <location>
        <begin position="67"/>
        <end position="69"/>
    </location>
    <ligand>
        <name>FMN</name>
        <dbReference type="ChEBI" id="CHEBI:58210"/>
    </ligand>
</feature>
<feature type="binding site" evidence="1">
    <location>
        <begin position="97"/>
        <end position="99"/>
    </location>
    <ligand>
        <name>substrate</name>
    </ligand>
</feature>
<feature type="binding site" evidence="1">
    <location>
        <position position="97"/>
    </location>
    <ligand>
        <name>FMN</name>
        <dbReference type="ChEBI" id="CHEBI:58210"/>
    </ligand>
</feature>
<feature type="binding site" evidence="1">
    <location>
        <position position="126"/>
    </location>
    <ligand>
        <name>FMN</name>
        <dbReference type="ChEBI" id="CHEBI:58210"/>
    </ligand>
</feature>
<feature type="binding site" evidence="1">
    <location>
        <position position="160"/>
    </location>
    <ligand>
        <name>substrate</name>
    </ligand>
</feature>
<feature type="binding site" evidence="1">
    <location>
        <position position="161"/>
    </location>
    <ligand>
        <name>Mg(2+)</name>
        <dbReference type="ChEBI" id="CHEBI:18420"/>
    </ligand>
</feature>
<feature type="binding site" evidence="1">
    <location>
        <position position="192"/>
    </location>
    <ligand>
        <name>FMN</name>
        <dbReference type="ChEBI" id="CHEBI:58210"/>
    </ligand>
</feature>
<feature type="binding site" evidence="1">
    <location>
        <position position="222"/>
    </location>
    <ligand>
        <name>FMN</name>
        <dbReference type="ChEBI" id="CHEBI:58210"/>
    </ligand>
</feature>
<feature type="binding site" evidence="1">
    <location>
        <begin position="272"/>
        <end position="274"/>
    </location>
    <ligand>
        <name>FMN</name>
        <dbReference type="ChEBI" id="CHEBI:58210"/>
    </ligand>
</feature>
<feature type="binding site" evidence="1">
    <location>
        <begin position="293"/>
        <end position="294"/>
    </location>
    <ligand>
        <name>FMN</name>
        <dbReference type="ChEBI" id="CHEBI:58210"/>
    </ligand>
</feature>
<evidence type="ECO:0000255" key="1">
    <source>
        <dbReference type="HAMAP-Rule" id="MF_00354"/>
    </source>
</evidence>
<name>IDI2_METAC</name>
<dbReference type="EC" id="5.3.3.2" evidence="1"/>
<dbReference type="EMBL" id="AE010299">
    <property type="protein sequence ID" value="AAM04048.1"/>
    <property type="molecule type" value="Genomic_DNA"/>
</dbReference>
<dbReference type="RefSeq" id="WP_011020653.1">
    <property type="nucleotide sequence ID" value="NC_003552.1"/>
</dbReference>
<dbReference type="SMR" id="Q8TT35"/>
<dbReference type="FunCoup" id="Q8TT35">
    <property type="interactions" value="21"/>
</dbReference>
<dbReference type="STRING" id="188937.MA_0604"/>
<dbReference type="EnsemblBacteria" id="AAM04048">
    <property type="protein sequence ID" value="AAM04048"/>
    <property type="gene ID" value="MA_0604"/>
</dbReference>
<dbReference type="GeneID" id="1472496"/>
<dbReference type="KEGG" id="mac:MA_0604"/>
<dbReference type="HOGENOM" id="CLU_065515_1_0_2"/>
<dbReference type="InParanoid" id="Q8TT35"/>
<dbReference type="OrthoDB" id="371955at2157"/>
<dbReference type="PhylomeDB" id="Q8TT35"/>
<dbReference type="Proteomes" id="UP000002487">
    <property type="component" value="Chromosome"/>
</dbReference>
<dbReference type="GO" id="GO:0005737">
    <property type="term" value="C:cytoplasm"/>
    <property type="evidence" value="ECO:0007669"/>
    <property type="project" value="UniProtKB-SubCell"/>
</dbReference>
<dbReference type="GO" id="GO:0010181">
    <property type="term" value="F:FMN binding"/>
    <property type="evidence" value="ECO:0007669"/>
    <property type="project" value="UniProtKB-UniRule"/>
</dbReference>
<dbReference type="GO" id="GO:0004452">
    <property type="term" value="F:isopentenyl-diphosphate delta-isomerase activity"/>
    <property type="evidence" value="ECO:0007669"/>
    <property type="project" value="UniProtKB-UniRule"/>
</dbReference>
<dbReference type="GO" id="GO:0000287">
    <property type="term" value="F:magnesium ion binding"/>
    <property type="evidence" value="ECO:0007669"/>
    <property type="project" value="UniProtKB-UniRule"/>
</dbReference>
<dbReference type="GO" id="GO:0070402">
    <property type="term" value="F:NADPH binding"/>
    <property type="evidence" value="ECO:0007669"/>
    <property type="project" value="UniProtKB-UniRule"/>
</dbReference>
<dbReference type="GO" id="GO:0016491">
    <property type="term" value="F:oxidoreductase activity"/>
    <property type="evidence" value="ECO:0007669"/>
    <property type="project" value="InterPro"/>
</dbReference>
<dbReference type="GO" id="GO:0008299">
    <property type="term" value="P:isoprenoid biosynthetic process"/>
    <property type="evidence" value="ECO:0007669"/>
    <property type="project" value="UniProtKB-UniRule"/>
</dbReference>
<dbReference type="CDD" id="cd02811">
    <property type="entry name" value="IDI-2_FMN"/>
    <property type="match status" value="1"/>
</dbReference>
<dbReference type="Gene3D" id="3.20.20.70">
    <property type="entry name" value="Aldolase class I"/>
    <property type="match status" value="1"/>
</dbReference>
<dbReference type="HAMAP" id="MF_00354">
    <property type="entry name" value="Idi_2"/>
    <property type="match status" value="1"/>
</dbReference>
<dbReference type="InterPro" id="IPR013785">
    <property type="entry name" value="Aldolase_TIM"/>
</dbReference>
<dbReference type="InterPro" id="IPR000262">
    <property type="entry name" value="FMN-dep_DH"/>
</dbReference>
<dbReference type="InterPro" id="IPR011179">
    <property type="entry name" value="IPdP_isomerase"/>
</dbReference>
<dbReference type="NCBIfam" id="TIGR02151">
    <property type="entry name" value="IPP_isom_2"/>
    <property type="match status" value="1"/>
</dbReference>
<dbReference type="PANTHER" id="PTHR43665">
    <property type="entry name" value="ISOPENTENYL-DIPHOSPHATE DELTA-ISOMERASE"/>
    <property type="match status" value="1"/>
</dbReference>
<dbReference type="PANTHER" id="PTHR43665:SF1">
    <property type="entry name" value="ISOPENTENYL-DIPHOSPHATE DELTA-ISOMERASE"/>
    <property type="match status" value="1"/>
</dbReference>
<dbReference type="Pfam" id="PF01070">
    <property type="entry name" value="FMN_dh"/>
    <property type="match status" value="1"/>
</dbReference>
<dbReference type="PIRSF" id="PIRSF003314">
    <property type="entry name" value="IPP_isomerase"/>
    <property type="match status" value="1"/>
</dbReference>
<dbReference type="SMART" id="SM01240">
    <property type="entry name" value="IMPDH"/>
    <property type="match status" value="1"/>
</dbReference>
<dbReference type="SUPFAM" id="SSF51395">
    <property type="entry name" value="FMN-linked oxidoreductases"/>
    <property type="match status" value="1"/>
</dbReference>